<keyword id="KW-1185">Reference proteome</keyword>
<keyword id="KW-0808">Transferase</keyword>
<name>GST8_CAEEL</name>
<reference key="1">
    <citation type="journal article" date="1998" name="Science">
        <title>Genome sequence of the nematode C. elegans: a platform for investigating biology.</title>
        <authorList>
            <consortium name="The C. elegans sequencing consortium"/>
        </authorList>
    </citation>
    <scope>NUCLEOTIDE SEQUENCE [LARGE SCALE GENOMIC DNA]</scope>
    <source>
        <strain>Bristol N2</strain>
    </source>
</reference>
<protein>
    <recommendedName>
        <fullName>Probable glutathione S-transferase 8</fullName>
        <ecNumber>2.5.1.18</ecNumber>
    </recommendedName>
    <alternativeName>
        <fullName>GST class-sigma</fullName>
    </alternativeName>
</protein>
<comment type="function">
    <text evidence="3">Conjugation of reduced glutathione to a wide number of exogenous and endogenous hydrophobic electrophiles.</text>
</comment>
<comment type="catalytic activity">
    <reaction evidence="3">
        <text>RX + glutathione = an S-substituted glutathione + a halide anion + H(+)</text>
        <dbReference type="Rhea" id="RHEA:16437"/>
        <dbReference type="ChEBI" id="CHEBI:15378"/>
        <dbReference type="ChEBI" id="CHEBI:16042"/>
        <dbReference type="ChEBI" id="CHEBI:17792"/>
        <dbReference type="ChEBI" id="CHEBI:57925"/>
        <dbReference type="ChEBI" id="CHEBI:90779"/>
        <dbReference type="EC" id="2.5.1.18"/>
    </reaction>
</comment>
<comment type="similarity">
    <text evidence="4">Belongs to the GST superfamily. Sigma family.</text>
</comment>
<accession>P91254</accession>
<evidence type="ECO:0000250" key="1">
    <source>
        <dbReference type="UniProtKB" id="O60760"/>
    </source>
</evidence>
<evidence type="ECO:0000250" key="2">
    <source>
        <dbReference type="UniProtKB" id="P46088"/>
    </source>
</evidence>
<evidence type="ECO:0000250" key="3">
    <source>
        <dbReference type="UniProtKB" id="P46436"/>
    </source>
</evidence>
<evidence type="ECO:0000305" key="4"/>
<proteinExistence type="inferred from homology"/>
<organism>
    <name type="scientific">Caenorhabditis elegans</name>
    <dbReference type="NCBI Taxonomy" id="6239"/>
    <lineage>
        <taxon>Eukaryota</taxon>
        <taxon>Metazoa</taxon>
        <taxon>Ecdysozoa</taxon>
        <taxon>Nematoda</taxon>
        <taxon>Chromadorea</taxon>
        <taxon>Rhabditida</taxon>
        <taxon>Rhabditina</taxon>
        <taxon>Rhabditomorpha</taxon>
        <taxon>Rhabditoidea</taxon>
        <taxon>Rhabditidae</taxon>
        <taxon>Peloderinae</taxon>
        <taxon>Caenorhabditis</taxon>
    </lineage>
</organism>
<feature type="chain" id="PRO_0000185931" description="Probable glutathione S-transferase 8">
    <location>
        <begin position="1"/>
        <end position="206"/>
    </location>
</feature>
<feature type="domain" description="GST N-terminal">
    <location>
        <begin position="2"/>
        <end position="79"/>
    </location>
</feature>
<feature type="domain" description="GST C-terminal">
    <location>
        <begin position="81"/>
        <end position="206"/>
    </location>
</feature>
<feature type="binding site" evidence="1">
    <location>
        <position position="8"/>
    </location>
    <ligand>
        <name>glutathione</name>
        <dbReference type="ChEBI" id="CHEBI:57925"/>
    </ligand>
</feature>
<feature type="binding site" evidence="1">
    <location>
        <position position="39"/>
    </location>
    <ligand>
        <name>glutathione</name>
        <dbReference type="ChEBI" id="CHEBI:57925"/>
    </ligand>
</feature>
<feature type="binding site" evidence="2">
    <location>
        <position position="43"/>
    </location>
    <ligand>
        <name>glutathione</name>
        <dbReference type="ChEBI" id="CHEBI:57925"/>
    </ligand>
</feature>
<feature type="binding site" evidence="1">
    <location>
        <begin position="49"/>
        <end position="51"/>
    </location>
    <ligand>
        <name>glutathione</name>
        <dbReference type="ChEBI" id="CHEBI:57925"/>
    </ligand>
</feature>
<feature type="binding site" evidence="1">
    <location>
        <begin position="63"/>
        <end position="64"/>
    </location>
    <ligand>
        <name>glutathione</name>
        <dbReference type="ChEBI" id="CHEBI:57925"/>
    </ligand>
</feature>
<sequence>MVHYKLSYFPIRGAGEVIRQIFVYAGQSFEDHRISIEEWAAVKPTTPFGQLPLLEVDGKVLPQSHSIARFLARQFGINGKCAWEEAQVNSIADQFKDYRNEVRPYVMVKMGFAEGDLDALSKDVFLPGFKKHYGFIYNFLKTAGSGYLVGDSLTFVDLLIAQHTADILSTDPALLEEFPQFKAHQEKVHSNANIKKWLETRPETQF</sequence>
<gene>
    <name type="primary">gst-8</name>
    <name type="ORF">F11G11.1</name>
</gene>
<dbReference type="EC" id="2.5.1.18"/>
<dbReference type="EMBL" id="FO081119">
    <property type="protein sequence ID" value="CCD69254.1"/>
    <property type="molecule type" value="Genomic_DNA"/>
</dbReference>
<dbReference type="PIR" id="T29986">
    <property type="entry name" value="T29986"/>
</dbReference>
<dbReference type="RefSeq" id="NP_494884.1">
    <property type="nucleotide sequence ID" value="NM_062483.4"/>
</dbReference>
<dbReference type="SMR" id="P91254"/>
<dbReference type="FunCoup" id="P91254">
    <property type="interactions" value="116"/>
</dbReference>
<dbReference type="STRING" id="6239.F11G11.1.1"/>
<dbReference type="PaxDb" id="6239-F11G11.1"/>
<dbReference type="PeptideAtlas" id="P91254"/>
<dbReference type="EnsemblMetazoa" id="F11G11.1.1">
    <property type="protein sequence ID" value="F11G11.1.1"/>
    <property type="gene ID" value="WBGene00001756"/>
</dbReference>
<dbReference type="GeneID" id="184364"/>
<dbReference type="KEGG" id="cel:CELE_F11G11.1"/>
<dbReference type="UCSC" id="F11G11.1">
    <property type="organism name" value="c. elegans"/>
</dbReference>
<dbReference type="AGR" id="WB:WBGene00001756"/>
<dbReference type="CTD" id="184364"/>
<dbReference type="WormBase" id="F11G11.1">
    <property type="protein sequence ID" value="CE07054"/>
    <property type="gene ID" value="WBGene00001756"/>
    <property type="gene designation" value="gst-8"/>
</dbReference>
<dbReference type="eggNOG" id="KOG1695">
    <property type="taxonomic scope" value="Eukaryota"/>
</dbReference>
<dbReference type="GeneTree" id="ENSGT00970000196005"/>
<dbReference type="HOGENOM" id="CLU_039475_1_1_1"/>
<dbReference type="InParanoid" id="P91254"/>
<dbReference type="OMA" id="YTHADIF"/>
<dbReference type="OrthoDB" id="414243at2759"/>
<dbReference type="PhylomeDB" id="P91254"/>
<dbReference type="PRO" id="PR:P91254"/>
<dbReference type="Proteomes" id="UP000001940">
    <property type="component" value="Chromosome II"/>
</dbReference>
<dbReference type="GO" id="GO:0004364">
    <property type="term" value="F:glutathione transferase activity"/>
    <property type="evidence" value="ECO:0000318"/>
    <property type="project" value="GO_Central"/>
</dbReference>
<dbReference type="GO" id="GO:0006749">
    <property type="term" value="P:glutathione metabolic process"/>
    <property type="evidence" value="ECO:0000318"/>
    <property type="project" value="GO_Central"/>
</dbReference>
<dbReference type="CDD" id="cd03192">
    <property type="entry name" value="GST_C_Sigma_like"/>
    <property type="match status" value="1"/>
</dbReference>
<dbReference type="CDD" id="cd03039">
    <property type="entry name" value="GST_N_Sigma_like"/>
    <property type="match status" value="1"/>
</dbReference>
<dbReference type="FunFam" id="1.20.1050.10:FF:000031">
    <property type="entry name" value="Glutathione S-Transferase"/>
    <property type="match status" value="1"/>
</dbReference>
<dbReference type="FunFam" id="3.40.30.10:FF:000035">
    <property type="entry name" value="hematopoietic prostaglandin D synthase"/>
    <property type="match status" value="1"/>
</dbReference>
<dbReference type="Gene3D" id="1.20.1050.10">
    <property type="match status" value="1"/>
</dbReference>
<dbReference type="Gene3D" id="3.40.30.10">
    <property type="entry name" value="Glutaredoxin"/>
    <property type="match status" value="1"/>
</dbReference>
<dbReference type="InterPro" id="IPR010987">
    <property type="entry name" value="Glutathione-S-Trfase_C-like"/>
</dbReference>
<dbReference type="InterPro" id="IPR036282">
    <property type="entry name" value="Glutathione-S-Trfase_C_sf"/>
</dbReference>
<dbReference type="InterPro" id="IPR040079">
    <property type="entry name" value="Glutathione_S-Trfase"/>
</dbReference>
<dbReference type="InterPro" id="IPR004045">
    <property type="entry name" value="Glutathione_S-Trfase_N"/>
</dbReference>
<dbReference type="InterPro" id="IPR004046">
    <property type="entry name" value="GST_C"/>
</dbReference>
<dbReference type="InterPro" id="IPR050213">
    <property type="entry name" value="GST_superfamily"/>
</dbReference>
<dbReference type="InterPro" id="IPR036249">
    <property type="entry name" value="Thioredoxin-like_sf"/>
</dbReference>
<dbReference type="PANTHER" id="PTHR11571">
    <property type="entry name" value="GLUTATHIONE S-TRANSFERASE"/>
    <property type="match status" value="1"/>
</dbReference>
<dbReference type="PANTHER" id="PTHR11571:SF98">
    <property type="entry name" value="GLUTATHIONE S-TRANSFERASE 7-RELATED"/>
    <property type="match status" value="1"/>
</dbReference>
<dbReference type="Pfam" id="PF14497">
    <property type="entry name" value="GST_C_3"/>
    <property type="match status" value="1"/>
</dbReference>
<dbReference type="Pfam" id="PF02798">
    <property type="entry name" value="GST_N"/>
    <property type="match status" value="1"/>
</dbReference>
<dbReference type="SFLD" id="SFLDG01205">
    <property type="entry name" value="AMPS.1"/>
    <property type="match status" value="1"/>
</dbReference>
<dbReference type="SFLD" id="SFLDS00019">
    <property type="entry name" value="Glutathione_Transferase_(cytos"/>
    <property type="match status" value="1"/>
</dbReference>
<dbReference type="SUPFAM" id="SSF47616">
    <property type="entry name" value="GST C-terminal domain-like"/>
    <property type="match status" value="1"/>
</dbReference>
<dbReference type="SUPFAM" id="SSF52833">
    <property type="entry name" value="Thioredoxin-like"/>
    <property type="match status" value="1"/>
</dbReference>
<dbReference type="PROSITE" id="PS50405">
    <property type="entry name" value="GST_CTER"/>
    <property type="match status" value="1"/>
</dbReference>
<dbReference type="PROSITE" id="PS50404">
    <property type="entry name" value="GST_NTER"/>
    <property type="match status" value="1"/>
</dbReference>